<comment type="function">
    <text evidence="2">Component of the ubiquinol-cytochrome c reductase complex (complex III or cytochrome b-c1 complex) that is part of the mitochondrial respiratory chain. The b-c1 complex mediates electron transfer from ubiquinol to cytochrome c. Contributes to the generation of a proton gradient across the mitochondrial membrane that is then used for ATP synthesis.</text>
</comment>
<comment type="cofactor">
    <cofactor evidence="2">
        <name>heme b</name>
        <dbReference type="ChEBI" id="CHEBI:60344"/>
    </cofactor>
    <text evidence="2">Binds 2 heme b groups non-covalently.</text>
</comment>
<comment type="subunit">
    <text evidence="2">The cytochrome bc1 complex contains 11 subunits: 3 respiratory subunits (MT-CYB, CYC1 and UQCRFS1), 2 core proteins (UQCRC1 and UQCRC2) and 6 low-molecular weight proteins (UQCRH/QCR6, UQCRB/QCR7, UQCRQ/QCR8, UQCR10/QCR9, UQCR11/QCR10 and a cleavage product of UQCRFS1). This cytochrome bc1 complex then forms a dimer.</text>
</comment>
<comment type="subcellular location">
    <subcellularLocation>
        <location evidence="2">Mitochondrion inner membrane</location>
        <topology evidence="2">Multi-pass membrane protein</topology>
    </subcellularLocation>
</comment>
<comment type="miscellaneous">
    <text evidence="1">Heme 1 (or BL or b562) is low-potential and absorbs at about 562 nm, and heme 2 (or BH or b566) is high-potential and absorbs at about 566 nm.</text>
</comment>
<comment type="similarity">
    <text evidence="3 4">Belongs to the cytochrome b family.</text>
</comment>
<comment type="caution">
    <text evidence="2">The full-length protein contains only eight transmembrane helices, not nine as predicted by bioinformatics tools.</text>
</comment>
<accession>Q34300</accession>
<organism>
    <name type="scientific">Dasyuroides byrnei</name>
    <name type="common">Kowari</name>
    <name type="synonym">Dasycercus byrnei</name>
    <dbReference type="NCBI Taxonomy" id="32544"/>
    <lineage>
        <taxon>Eukaryota</taxon>
        <taxon>Metazoa</taxon>
        <taxon>Chordata</taxon>
        <taxon>Craniata</taxon>
        <taxon>Vertebrata</taxon>
        <taxon>Euteleostomi</taxon>
        <taxon>Mammalia</taxon>
        <taxon>Metatheria</taxon>
        <taxon>Dasyuromorphia</taxon>
        <taxon>Dasyuridae</taxon>
        <taxon>Dasyuroides</taxon>
    </lineage>
</organism>
<sequence>MINLRKTHPILKIINHSFIDLPAPSNISAWWNFGSLLGICLVIQILTGLFLAMHYTSDTLTAFSSVAHICRDVNHGWLLRNLHANGASMFFMCLFLHVGRGIYYGSYLYKETWNIGVILLLTVMATAFVGYVLPWGQMSFWGATVITNLLSAIPYIGTTLAEWIWGGFAVDKATLTRFFAFHFILPFIITALAIVHLLFLHETGSNNPSGINPDSDKIPFHPYYTIKDALGLMFLLLVLLLLALFSPDLLGDPDNFSPANPLNTPPHIKPEWYFLFAYAILRSIPNKLGGVLALLASILILLIIPLLHTANQRSMMFRPISQTLFWILTANLITLTWIGGQPVEQPFIIIGQLASMLYFMLILVLMPLAGLFENYMLKPKW</sequence>
<keyword id="KW-0249">Electron transport</keyword>
<keyword id="KW-0349">Heme</keyword>
<keyword id="KW-0408">Iron</keyword>
<keyword id="KW-0472">Membrane</keyword>
<keyword id="KW-0479">Metal-binding</keyword>
<keyword id="KW-0496">Mitochondrion</keyword>
<keyword id="KW-0999">Mitochondrion inner membrane</keyword>
<keyword id="KW-0679">Respiratory chain</keyword>
<keyword id="KW-0812">Transmembrane</keyword>
<keyword id="KW-1133">Transmembrane helix</keyword>
<keyword id="KW-0813">Transport</keyword>
<keyword id="KW-0830">Ubiquinone</keyword>
<feature type="chain" id="PRO_0000060862" description="Cytochrome b">
    <location>
        <begin position="1"/>
        <end position="381"/>
    </location>
</feature>
<feature type="transmembrane region" description="Helical" evidence="2">
    <location>
        <begin position="33"/>
        <end position="53"/>
    </location>
</feature>
<feature type="transmembrane region" description="Helical" evidence="2">
    <location>
        <begin position="77"/>
        <end position="98"/>
    </location>
</feature>
<feature type="transmembrane region" description="Helical" evidence="2">
    <location>
        <begin position="113"/>
        <end position="133"/>
    </location>
</feature>
<feature type="transmembrane region" description="Helical" evidence="2">
    <location>
        <begin position="178"/>
        <end position="198"/>
    </location>
</feature>
<feature type="transmembrane region" description="Helical" evidence="2">
    <location>
        <begin position="226"/>
        <end position="246"/>
    </location>
</feature>
<feature type="transmembrane region" description="Helical" evidence="2">
    <location>
        <begin position="288"/>
        <end position="308"/>
    </location>
</feature>
<feature type="transmembrane region" description="Helical" evidence="2">
    <location>
        <begin position="320"/>
        <end position="340"/>
    </location>
</feature>
<feature type="transmembrane region" description="Helical" evidence="2">
    <location>
        <begin position="347"/>
        <end position="367"/>
    </location>
</feature>
<feature type="binding site" description="axial binding residue" evidence="2">
    <location>
        <position position="83"/>
    </location>
    <ligand>
        <name>heme b</name>
        <dbReference type="ChEBI" id="CHEBI:60344"/>
        <label>b562</label>
    </ligand>
    <ligandPart>
        <name>Fe</name>
        <dbReference type="ChEBI" id="CHEBI:18248"/>
    </ligandPart>
</feature>
<feature type="binding site" description="axial binding residue" evidence="2">
    <location>
        <position position="97"/>
    </location>
    <ligand>
        <name>heme b</name>
        <dbReference type="ChEBI" id="CHEBI:60344"/>
        <label>b566</label>
    </ligand>
    <ligandPart>
        <name>Fe</name>
        <dbReference type="ChEBI" id="CHEBI:18248"/>
    </ligandPart>
</feature>
<feature type="binding site" description="axial binding residue" evidence="2">
    <location>
        <position position="182"/>
    </location>
    <ligand>
        <name>heme b</name>
        <dbReference type="ChEBI" id="CHEBI:60344"/>
        <label>b562</label>
    </ligand>
    <ligandPart>
        <name>Fe</name>
        <dbReference type="ChEBI" id="CHEBI:18248"/>
    </ligandPart>
</feature>
<feature type="binding site" description="axial binding residue" evidence="2">
    <location>
        <position position="196"/>
    </location>
    <ligand>
        <name>heme b</name>
        <dbReference type="ChEBI" id="CHEBI:60344"/>
        <label>b566</label>
    </ligand>
    <ligandPart>
        <name>Fe</name>
        <dbReference type="ChEBI" id="CHEBI:18248"/>
    </ligandPart>
</feature>
<feature type="binding site" evidence="2">
    <location>
        <position position="201"/>
    </location>
    <ligand>
        <name>a ubiquinone</name>
        <dbReference type="ChEBI" id="CHEBI:16389"/>
    </ligand>
</feature>
<dbReference type="EMBL" id="U07579">
    <property type="protein sequence ID" value="AAB88757.1"/>
    <property type="molecule type" value="Genomic_DNA"/>
</dbReference>
<dbReference type="SMR" id="Q34300"/>
<dbReference type="GO" id="GO:0005743">
    <property type="term" value="C:mitochondrial inner membrane"/>
    <property type="evidence" value="ECO:0007669"/>
    <property type="project" value="UniProtKB-SubCell"/>
</dbReference>
<dbReference type="GO" id="GO:0045275">
    <property type="term" value="C:respiratory chain complex III"/>
    <property type="evidence" value="ECO:0007669"/>
    <property type="project" value="InterPro"/>
</dbReference>
<dbReference type="GO" id="GO:0046872">
    <property type="term" value="F:metal ion binding"/>
    <property type="evidence" value="ECO:0007669"/>
    <property type="project" value="UniProtKB-KW"/>
</dbReference>
<dbReference type="GO" id="GO:0008121">
    <property type="term" value="F:ubiquinol-cytochrome-c reductase activity"/>
    <property type="evidence" value="ECO:0007669"/>
    <property type="project" value="InterPro"/>
</dbReference>
<dbReference type="GO" id="GO:0006122">
    <property type="term" value="P:mitochondrial electron transport, ubiquinol to cytochrome c"/>
    <property type="evidence" value="ECO:0007669"/>
    <property type="project" value="TreeGrafter"/>
</dbReference>
<dbReference type="CDD" id="cd00290">
    <property type="entry name" value="cytochrome_b_C"/>
    <property type="match status" value="1"/>
</dbReference>
<dbReference type="CDD" id="cd00284">
    <property type="entry name" value="Cytochrome_b_N"/>
    <property type="match status" value="1"/>
</dbReference>
<dbReference type="FunFam" id="1.20.810.10:FF:000002">
    <property type="entry name" value="Cytochrome b"/>
    <property type="match status" value="1"/>
</dbReference>
<dbReference type="Gene3D" id="1.20.810.10">
    <property type="entry name" value="Cytochrome Bc1 Complex, Chain C"/>
    <property type="match status" value="1"/>
</dbReference>
<dbReference type="InterPro" id="IPR005798">
    <property type="entry name" value="Cyt_b/b6_C"/>
</dbReference>
<dbReference type="InterPro" id="IPR036150">
    <property type="entry name" value="Cyt_b/b6_C_sf"/>
</dbReference>
<dbReference type="InterPro" id="IPR005797">
    <property type="entry name" value="Cyt_b/b6_N"/>
</dbReference>
<dbReference type="InterPro" id="IPR027387">
    <property type="entry name" value="Cytb/b6-like_sf"/>
</dbReference>
<dbReference type="InterPro" id="IPR030689">
    <property type="entry name" value="Cytochrome_b"/>
</dbReference>
<dbReference type="InterPro" id="IPR048260">
    <property type="entry name" value="Cytochrome_b_C_euk/bac"/>
</dbReference>
<dbReference type="InterPro" id="IPR048259">
    <property type="entry name" value="Cytochrome_b_N_euk/bac"/>
</dbReference>
<dbReference type="InterPro" id="IPR016174">
    <property type="entry name" value="Di-haem_cyt_TM"/>
</dbReference>
<dbReference type="PANTHER" id="PTHR19271">
    <property type="entry name" value="CYTOCHROME B"/>
    <property type="match status" value="1"/>
</dbReference>
<dbReference type="PANTHER" id="PTHR19271:SF16">
    <property type="entry name" value="CYTOCHROME B"/>
    <property type="match status" value="1"/>
</dbReference>
<dbReference type="Pfam" id="PF00032">
    <property type="entry name" value="Cytochrom_B_C"/>
    <property type="match status" value="1"/>
</dbReference>
<dbReference type="Pfam" id="PF00033">
    <property type="entry name" value="Cytochrome_B"/>
    <property type="match status" value="1"/>
</dbReference>
<dbReference type="PIRSF" id="PIRSF038885">
    <property type="entry name" value="COB"/>
    <property type="match status" value="1"/>
</dbReference>
<dbReference type="SUPFAM" id="SSF81648">
    <property type="entry name" value="a domain/subunit of cytochrome bc1 complex (Ubiquinol-cytochrome c reductase)"/>
    <property type="match status" value="1"/>
</dbReference>
<dbReference type="SUPFAM" id="SSF81342">
    <property type="entry name" value="Transmembrane di-heme cytochromes"/>
    <property type="match status" value="1"/>
</dbReference>
<dbReference type="PROSITE" id="PS51003">
    <property type="entry name" value="CYTB_CTER"/>
    <property type="match status" value="1"/>
</dbReference>
<dbReference type="PROSITE" id="PS51002">
    <property type="entry name" value="CYTB_NTER"/>
    <property type="match status" value="1"/>
</dbReference>
<proteinExistence type="inferred from homology"/>
<reference key="1">
    <citation type="journal article" date="1994" name="J. Mammal. Evol.">
        <title>Phylogenetic structure of the marsupial family Dasyuridae based on cytochrome-b DNA sequences.</title>
        <authorList>
            <person name="Krajewski C."/>
            <person name="Painter J."/>
            <person name="Buckley L."/>
            <person name="Westerman M."/>
        </authorList>
    </citation>
    <scope>NUCLEOTIDE SEQUENCE [GENOMIC DNA]</scope>
</reference>
<name>CYB_DASBY</name>
<gene>
    <name type="primary">MT-CYB</name>
    <name type="synonym">COB</name>
    <name type="synonym">CYTB</name>
    <name type="synonym">MTCYB</name>
</gene>
<evidence type="ECO:0000250" key="1"/>
<evidence type="ECO:0000250" key="2">
    <source>
        <dbReference type="UniProtKB" id="P00157"/>
    </source>
</evidence>
<evidence type="ECO:0000255" key="3">
    <source>
        <dbReference type="PROSITE-ProRule" id="PRU00967"/>
    </source>
</evidence>
<evidence type="ECO:0000255" key="4">
    <source>
        <dbReference type="PROSITE-ProRule" id="PRU00968"/>
    </source>
</evidence>
<protein>
    <recommendedName>
        <fullName>Cytochrome b</fullName>
    </recommendedName>
    <alternativeName>
        <fullName>Complex III subunit 3</fullName>
    </alternativeName>
    <alternativeName>
        <fullName>Complex III subunit III</fullName>
    </alternativeName>
    <alternativeName>
        <fullName>Cytochrome b-c1 complex subunit 3</fullName>
    </alternativeName>
    <alternativeName>
        <fullName>Ubiquinol-cytochrome-c reductase complex cytochrome b subunit</fullName>
    </alternativeName>
</protein>
<geneLocation type="mitochondrion"/>